<protein>
    <recommendedName>
        <fullName>NEDD4 family-interacting protein 1-like</fullName>
    </recommendedName>
</protein>
<reference key="1">
    <citation type="submission" date="2004-07" db="EMBL/GenBank/DDBJ databases">
        <authorList>
            <consortium name="NIH - Zebrafish Gene Collection (ZGC) project"/>
        </authorList>
    </citation>
    <scope>NUCLEOTIDE SEQUENCE [LARGE SCALE MRNA]</scope>
    <source>
        <tissue>Brain</tissue>
    </source>
</reference>
<feature type="chain" id="PRO_0000076272" description="NEDD4 family-interacting protein 1-like">
    <location>
        <begin position="1"/>
        <end position="210"/>
    </location>
</feature>
<feature type="topological domain" description="Cytoplasmic" evidence="2">
    <location>
        <begin position="1"/>
        <end position="105"/>
    </location>
</feature>
<feature type="transmembrane region" description="Helical" evidence="2">
    <location>
        <begin position="106"/>
        <end position="126"/>
    </location>
</feature>
<feature type="topological domain" description="Extracellular" evidence="2">
    <location>
        <begin position="127"/>
        <end position="132"/>
    </location>
</feature>
<feature type="transmembrane region" description="Helical" evidence="2">
    <location>
        <begin position="133"/>
        <end position="153"/>
    </location>
</feature>
<feature type="topological domain" description="Cytoplasmic" evidence="2">
    <location>
        <begin position="154"/>
        <end position="161"/>
    </location>
</feature>
<feature type="transmembrane region" description="Helical" evidence="2">
    <location>
        <begin position="162"/>
        <end position="182"/>
    </location>
</feature>
<feature type="topological domain" description="Extracellular" evidence="2">
    <location>
        <begin position="183"/>
        <end position="210"/>
    </location>
</feature>
<feature type="region of interest" description="Disordered" evidence="3">
    <location>
        <begin position="1"/>
        <end position="31"/>
    </location>
</feature>
<feature type="short sequence motif" description="PPxY motif 1">
    <location>
        <begin position="30"/>
        <end position="33"/>
    </location>
</feature>
<feature type="short sequence motif" description="PPxY motif 2">
    <location>
        <begin position="53"/>
        <end position="56"/>
    </location>
</feature>
<sequence length="210" mass="23776">MAEPSGRYQQLPCEEEPEAGPQVAADAPPPYSSIAADSAAFFDYKDDAAFPNPPSYNVATSLPSYDEAERTKTETSVPLVSGRDDDFVARDDFEDADQLRIGNDGIFMLTFFMAFLFNWIGFFLSFCLTTSAAGRYGAISGFGLSLIKWILIVRFSTYFPGYFDGQYWLWWVFLVLGFLLFLRGFINYAKIRKMADSFSTLPRTRVLFIY</sequence>
<evidence type="ECO:0000250" key="1"/>
<evidence type="ECO:0000255" key="2"/>
<evidence type="ECO:0000256" key="3">
    <source>
        <dbReference type="SAM" id="MobiDB-lite"/>
    </source>
</evidence>
<dbReference type="EMBL" id="BC076296">
    <property type="protein sequence ID" value="AAH76296.1"/>
    <property type="molecule type" value="mRNA"/>
</dbReference>
<dbReference type="RefSeq" id="NP_001002503.1">
    <property type="nucleotide sequence ID" value="NM_001002503.2"/>
</dbReference>
<dbReference type="RefSeq" id="XP_009293887.1">
    <property type="nucleotide sequence ID" value="XM_009295612.1"/>
</dbReference>
<dbReference type="SMR" id="Q6DGP4"/>
<dbReference type="FunCoup" id="Q6DGP4">
    <property type="interactions" value="940"/>
</dbReference>
<dbReference type="STRING" id="7955.ENSDARP00000135351"/>
<dbReference type="PaxDb" id="7955-ENSDARP00000125987"/>
<dbReference type="Ensembl" id="ENSDART00000166750">
    <property type="protein sequence ID" value="ENSDARP00000135351"/>
    <property type="gene ID" value="ENSDARG00000102367"/>
</dbReference>
<dbReference type="Ensembl" id="ENSDART00000171297">
    <property type="protein sequence ID" value="ENSDARP00000137128"/>
    <property type="gene ID" value="ENSDARG00000102367"/>
</dbReference>
<dbReference type="Ensembl" id="ENSDART00000174570">
    <property type="protein sequence ID" value="ENSDARP00000143559"/>
    <property type="gene ID" value="ENSDARG00000102367"/>
</dbReference>
<dbReference type="GeneID" id="436776"/>
<dbReference type="KEGG" id="dre:436776"/>
<dbReference type="AGR" id="ZFIN:ZDB-GENE-040718-207"/>
<dbReference type="CTD" id="436776"/>
<dbReference type="ZFIN" id="ZDB-GENE-040718-207">
    <property type="gene designation" value="ndfip1l"/>
</dbReference>
<dbReference type="eggNOG" id="KOG4812">
    <property type="taxonomic scope" value="Eukaryota"/>
</dbReference>
<dbReference type="HOGENOM" id="CLU_074980_2_0_1"/>
<dbReference type="InParanoid" id="Q6DGP4"/>
<dbReference type="OrthoDB" id="10003116at2759"/>
<dbReference type="PhylomeDB" id="Q6DGP4"/>
<dbReference type="TreeFam" id="TF324911"/>
<dbReference type="PRO" id="PR:Q6DGP4"/>
<dbReference type="Proteomes" id="UP000000437">
    <property type="component" value="Chromosome 21"/>
</dbReference>
<dbReference type="Bgee" id="ENSDARG00000102367">
    <property type="expression patterns" value="Expressed in pharyngeal gill and 20 other cell types or tissues"/>
</dbReference>
<dbReference type="ExpressionAtlas" id="Q6DGP4">
    <property type="expression patterns" value="baseline and differential"/>
</dbReference>
<dbReference type="GO" id="GO:0005783">
    <property type="term" value="C:endoplasmic reticulum"/>
    <property type="evidence" value="ECO:0000318"/>
    <property type="project" value="GO_Central"/>
</dbReference>
<dbReference type="GO" id="GO:0005794">
    <property type="term" value="C:Golgi apparatus"/>
    <property type="evidence" value="ECO:0000318"/>
    <property type="project" value="GO_Central"/>
</dbReference>
<dbReference type="GO" id="GO:0000139">
    <property type="term" value="C:Golgi membrane"/>
    <property type="evidence" value="ECO:0007669"/>
    <property type="project" value="UniProtKB-SubCell"/>
</dbReference>
<dbReference type="GO" id="GO:0048471">
    <property type="term" value="C:perinuclear region of cytoplasm"/>
    <property type="evidence" value="ECO:0000318"/>
    <property type="project" value="GO_Central"/>
</dbReference>
<dbReference type="GO" id="GO:0030001">
    <property type="term" value="P:metal ion transport"/>
    <property type="evidence" value="ECO:0007669"/>
    <property type="project" value="InterPro"/>
</dbReference>
<dbReference type="GO" id="GO:0031398">
    <property type="term" value="P:positive regulation of protein ubiquitination"/>
    <property type="evidence" value="ECO:0000318"/>
    <property type="project" value="GO_Central"/>
</dbReference>
<dbReference type="GO" id="GO:0006511">
    <property type="term" value="P:ubiquitin-dependent protein catabolic process"/>
    <property type="evidence" value="ECO:0000318"/>
    <property type="project" value="GO_Central"/>
</dbReference>
<dbReference type="GO" id="GO:0007034">
    <property type="term" value="P:vacuolar transport"/>
    <property type="evidence" value="ECO:0007669"/>
    <property type="project" value="InterPro"/>
</dbReference>
<dbReference type="CDD" id="cd22305">
    <property type="entry name" value="NDFIP1"/>
    <property type="match status" value="1"/>
</dbReference>
<dbReference type="InterPro" id="IPR019325">
    <property type="entry name" value="NEDD4/Bsd2"/>
</dbReference>
<dbReference type="PANTHER" id="PTHR13396">
    <property type="entry name" value="NEDD4 FAMILY INTERACTING PROTEIN 1/2"/>
    <property type="match status" value="1"/>
</dbReference>
<dbReference type="PANTHER" id="PTHR13396:SF3">
    <property type="entry name" value="NEDD4 FAMILY-INTERACTING PROTEIN 1"/>
    <property type="match status" value="1"/>
</dbReference>
<dbReference type="Pfam" id="PF10176">
    <property type="entry name" value="NEDD4_Bsd2"/>
    <property type="match status" value="2"/>
</dbReference>
<proteinExistence type="evidence at transcript level"/>
<keyword id="KW-0333">Golgi apparatus</keyword>
<keyword id="KW-0472">Membrane</keyword>
<keyword id="KW-1185">Reference proteome</keyword>
<keyword id="KW-0677">Repeat</keyword>
<keyword id="KW-0812">Transmembrane</keyword>
<keyword id="KW-1133">Transmembrane helix</keyword>
<organism>
    <name type="scientific">Danio rerio</name>
    <name type="common">Zebrafish</name>
    <name type="synonym">Brachydanio rerio</name>
    <dbReference type="NCBI Taxonomy" id="7955"/>
    <lineage>
        <taxon>Eukaryota</taxon>
        <taxon>Metazoa</taxon>
        <taxon>Chordata</taxon>
        <taxon>Craniata</taxon>
        <taxon>Vertebrata</taxon>
        <taxon>Euteleostomi</taxon>
        <taxon>Actinopterygii</taxon>
        <taxon>Neopterygii</taxon>
        <taxon>Teleostei</taxon>
        <taxon>Ostariophysi</taxon>
        <taxon>Cypriniformes</taxon>
        <taxon>Danionidae</taxon>
        <taxon>Danioninae</taxon>
        <taxon>Danio</taxon>
    </lineage>
</organism>
<comment type="function">
    <text evidence="1">May play a role in Golgi structure maintenance.</text>
</comment>
<comment type="subcellular location">
    <subcellularLocation>
        <location evidence="1">Golgi apparatus membrane</location>
        <topology evidence="1">Multi-pass membrane protein</topology>
    </subcellularLocation>
</comment>
<accession>Q6DGP4</accession>
<name>NFI1L_DANRE</name>
<gene>
    <name type="primary">ndfip1l</name>
    <name type="synonym">ndfip1</name>
    <name type="ORF">zgc:92833</name>
</gene>